<dbReference type="EC" id="2.7.7.48"/>
<dbReference type="EMBL" id="AF039063">
    <property type="protein sequence ID" value="AAC98925.1"/>
    <property type="molecule type" value="mRNA"/>
</dbReference>
<dbReference type="EMBL" id="M64034">
    <property type="protein sequence ID" value="AAA47824.1"/>
    <property type="molecule type" value="Genomic_RNA"/>
</dbReference>
<dbReference type="PIR" id="A40894">
    <property type="entry name" value="A40894"/>
</dbReference>
<dbReference type="RefSeq" id="NP_660178.1">
    <property type="nucleotide sequence ID" value="NC_004051.1"/>
</dbReference>
<dbReference type="GeneID" id="949218"/>
<dbReference type="KEGG" id="vg:949218"/>
<dbReference type="OrthoDB" id="17768at10239"/>
<dbReference type="Proteomes" id="UP000001104">
    <property type="component" value="Genome"/>
</dbReference>
<dbReference type="GO" id="GO:0030430">
    <property type="term" value="C:host cell cytoplasm"/>
    <property type="evidence" value="ECO:0007669"/>
    <property type="project" value="UniProtKB-SubCell"/>
</dbReference>
<dbReference type="GO" id="GO:1990904">
    <property type="term" value="C:ribonucleoprotein complex"/>
    <property type="evidence" value="ECO:0007669"/>
    <property type="project" value="UniProtKB-KW"/>
</dbReference>
<dbReference type="GO" id="GO:0003723">
    <property type="term" value="F:RNA binding"/>
    <property type="evidence" value="ECO:0007669"/>
    <property type="project" value="UniProtKB-KW"/>
</dbReference>
<dbReference type="GO" id="GO:0003968">
    <property type="term" value="F:RNA-directed RNA polymerase activity"/>
    <property type="evidence" value="ECO:0007669"/>
    <property type="project" value="UniProtKB-KW"/>
</dbReference>
<dbReference type="CDD" id="cd23177">
    <property type="entry name" value="ps-ssRNAv_Narnaviridae_RdRp"/>
    <property type="match status" value="1"/>
</dbReference>
<dbReference type="InterPro" id="IPR043502">
    <property type="entry name" value="DNA/RNA_pol_sf"/>
</dbReference>
<dbReference type="SUPFAM" id="SSF56672">
    <property type="entry name" value="DNA/RNA polymerases"/>
    <property type="match status" value="1"/>
</dbReference>
<proteinExistence type="evidence at protein level"/>
<reference key="1">
    <citation type="journal article" date="1991" name="J. Biol. Chem.">
        <title>Molecular cloning and characterization of W double-stranded RNA, a linear molecule present in Saccharomyces cerevisiae.</title>
        <authorList>
            <person name="Rodriguez-Cousino N."/>
            <person name="Esteban L.M."/>
            <person name="Esteban R."/>
        </authorList>
    </citation>
    <scope>NUCLEOTIDE SEQUENCE [GENOMIC RNA]</scope>
</reference>
<reference key="2">
    <citation type="journal article" date="1991" name="J. Biol. Chem.">
        <title>Yeast 20 S RNA replicon. Replication intermediates and encoded putative RNA polymerase.</title>
        <authorList>
            <person name="Matsumoto Y."/>
            <person name="Wickner R.B."/>
        </authorList>
    </citation>
    <scope>NUCLEOTIDE SEQUENCE [GENOMIC RNA]</scope>
</reference>
<reference key="3">
    <citation type="journal article" date="1998" name="J. Biol. Chem.">
        <title>Yeast positive-stranded virus-like RNA replicons. 20 S and 23 S RNA terminal nucleotide sequences and 3' end secondary structures resemble those of RNA coliphages.</title>
        <authorList>
            <person name="Rodriguez-Cousino N."/>
            <person name="Solorzano A."/>
            <person name="Fujimura T."/>
            <person name="Esteban R."/>
        </authorList>
    </citation>
    <scope>NUCLEOTIDE SEQUENCE [GENOMIC RNA]</scope>
</reference>
<reference key="4">
    <citation type="journal article" date="1995" name="J. Biol. Chem.">
        <title>Yeast viral 20 S RNA is associated with its cognate RNA-dependent RNA polymerase.</title>
        <authorList>
            <person name="Garcia-Cuellar M.P."/>
            <person name="Esteban L.M."/>
            <person name="Fujimura T."/>
            <person name="Rodriguez-Cousino N."/>
            <person name="Esteban R."/>
        </authorList>
    </citation>
    <scope>SUBUNIT</scope>
</reference>
<reference key="5">
    <citation type="journal article" date="1997" name="RNA">
        <title>RNA-dependent RNA polymerase activity associated with the yeast viral p91/20S RNA ribonucleoprotein complex.</title>
        <authorList>
            <person name="Garcia-Cuellar M.P."/>
            <person name="Esteban R."/>
            <person name="Fujimura T."/>
        </authorList>
    </citation>
    <scope>FUNCTION</scope>
</reference>
<reference key="6">
    <citation type="journal article" date="2000" name="J. Biol. Chem.">
        <title>Persistent yeast single-stranded RNA viruses exist in vivo as genomic RNA.RNA polymerase complexes in 1:1 stoichiometry.</title>
        <authorList>
            <person name="Solorzano A."/>
            <person name="Rodriguez-Cousino N."/>
            <person name="Esteban R."/>
            <person name="Fujimura T."/>
        </authorList>
    </citation>
    <scope>SUBCELLULAR LOCATION</scope>
    <scope>SUBUNIT</scope>
</reference>
<organismHost>
    <name type="scientific">Saccharomyces cerevisiae</name>
    <name type="common">Baker's yeast</name>
    <dbReference type="NCBI Taxonomy" id="4932"/>
</organismHost>
<accession>P25328</accession>
<accession>Q90141</accession>
<name>RDRP_SCV20</name>
<feature type="chain" id="PRO_0000097459" description="RNA-directed RNA polymerase">
    <location>
        <begin position="1"/>
        <end position="829"/>
    </location>
</feature>
<feature type="region of interest" description="Disordered" evidence="1">
    <location>
        <begin position="1"/>
        <end position="39"/>
    </location>
</feature>
<feature type="sequence conflict" description="In Ref. 2; AAA47824." evidence="5" ref="2">
    <original>SGFP</original>
    <variation>V</variation>
    <location>
        <begin position="826"/>
        <end position="829"/>
    </location>
</feature>
<protein>
    <recommendedName>
        <fullName>RNA-directed RNA polymerase</fullName>
        <ecNumber>2.7.7.48</ecNumber>
    </recommendedName>
    <alternativeName>
        <fullName>p91</fullName>
    </alternativeName>
</protein>
<comment type="function">
    <text evidence="4">RNA-directed RNA polymerase that replicates the viral (+) and (-) genome.</text>
</comment>
<comment type="catalytic activity">
    <reaction>
        <text>RNA(n) + a ribonucleoside 5'-triphosphate = RNA(n+1) + diphosphate</text>
        <dbReference type="Rhea" id="RHEA:21248"/>
        <dbReference type="Rhea" id="RHEA-COMP:14527"/>
        <dbReference type="Rhea" id="RHEA-COMP:17342"/>
        <dbReference type="ChEBI" id="CHEBI:33019"/>
        <dbReference type="ChEBI" id="CHEBI:61557"/>
        <dbReference type="ChEBI" id="CHEBI:140395"/>
        <dbReference type="EC" id="2.7.7.48"/>
    </reaction>
</comment>
<comment type="subunit">
    <text evidence="2 3">Forms a ribonucleoprotein complex with the 20S RNA, where a single polymerase molecule binds to a single viral RNA genome. Since the viral RNA is not encapsidated, ribonucleoprotein complex formation appears to be the strategy to survive in the host as persistent virus.</text>
</comment>
<comment type="subcellular location">
    <subcellularLocation>
        <location evidence="2">Host cytoplasm</location>
    </subcellularLocation>
    <text>The virus has no extracellular transmission pathway. It exists as a ribonucleoprotein viral particle in the host cytoplasm and can be transmitted through mating or cytoplasmic mixing (cytoduction).</text>
</comment>
<comment type="miscellaneous">
    <text>Yeast strains also contain a double-stranded RNA (dsRNA) called W. The (+)-strand of W is identical to the single-stranded 20S RNA. The W dsRNA seems to be a by-product of the viral RNA replication cycle.</text>
</comment>
<sequence length="829" mass="91809">MKEPVDCRLSTPAGFSGTVPPPGRTKAARPGTIPVRRSRGSASALPGKIYGWSRRQRDRFAMLLSSFDAALAAYSGVVVSRGTRSLPPSLRLFRAMTRKWLSVTARGNGVEFAIASAKEFSAACRAGWISGTVPDHFFMKWLPEPVRRKSGLWAQLSFIGRSLPEGGDRHEIEALANHKAALSSSFEVPADVLTSLRNYSEDWARRHLAADPDPSLLCEPCTGNSATFERTRREGGFAQSITDLVSSSPTDNLPPLESMPFGPTQGQALPVHVLEVSLSRYHNGSDPKGRVSVVRERGHKVRVVSAMETHELVLGHAARRRLFKGLRRERRLRDTLKGDFEATTKAFVGCAGTVISSDMKSASDLIPLSVASAIVDGLEASGRLLPVEIAGLRACTGPQHLVYPDGSEITTRRGILMGLPTTWAILNLMHLWCWDSADRQYRLEGHPFRATVRSDCRVCGDDLIGVGPDSLLRSYDRNLGLVGMILSPGKHFRSNRRGVFLERLLEFQTRKTVYEHAVIYRKVGHRRVPVDRSHIPVVTRVTVLNTIPLKGLVRASVLGRDDPPVWWAAAVAESSLLSDYPRKKIFAAARTLRPGLSRQFRRLGIPPFLPRELGGAGLVGPSDRVDAPAFHRKAISSLVWGSDATAAYSFIRMWQGFEGHPWKTAASQETDTWFADYKVTRPGKMYPDRYGFLDGESLRTKSTMLNSAVYETFLGPDPDATHYPSLRIVASRLAKVRKDLVNRWPSVKPVGKDLGTILEAFEESKLCTLWVTPYDASGYFDDSLLLMDESVYQRRFRQLVIAGLMREGRMGDLLFPNWLPPSTVVSGFP</sequence>
<keyword id="KW-1035">Host cytoplasm</keyword>
<keyword id="KW-0548">Nucleotidyltransferase</keyword>
<keyword id="KW-1185">Reference proteome</keyword>
<keyword id="KW-0687">Ribonucleoprotein</keyword>
<keyword id="KW-0694">RNA-binding</keyword>
<keyword id="KW-0696">RNA-directed RNA polymerase</keyword>
<keyword id="KW-0808">Transferase</keyword>
<keyword id="KW-0693">Viral RNA replication</keyword>
<evidence type="ECO:0000256" key="1">
    <source>
        <dbReference type="SAM" id="MobiDB-lite"/>
    </source>
</evidence>
<evidence type="ECO:0000269" key="2">
    <source>
    </source>
</evidence>
<evidence type="ECO:0000269" key="3">
    <source>
    </source>
</evidence>
<evidence type="ECO:0000269" key="4">
    <source>
    </source>
</evidence>
<evidence type="ECO:0000305" key="5"/>
<organism>
    <name type="scientific">Saccharomyces 20S RNA narnavirus</name>
    <name type="common">ScNV-20S</name>
    <dbReference type="NCBI Taxonomy" id="186772"/>
    <lineage>
        <taxon>Viruses</taxon>
        <taxon>Riboviria</taxon>
        <taxon>Orthornavirae</taxon>
        <taxon>Lenarviricota</taxon>
        <taxon>Amabiliviricetes</taxon>
        <taxon>Wolframvirales</taxon>
        <taxon>Narnaviridae</taxon>
        <taxon>Narnavirus</taxon>
    </lineage>
</organism>